<proteinExistence type="evidence at protein level"/>
<keyword id="KW-0903">Direct protein sequencing</keyword>
<keyword id="KW-0378">Hydrolase</keyword>
<comment type="catalytic activity">
    <reaction evidence="2">
        <text>diphosphate + H2O = 2 phosphate + H(+)</text>
        <dbReference type="Rhea" id="RHEA:24576"/>
        <dbReference type="ChEBI" id="CHEBI:15377"/>
        <dbReference type="ChEBI" id="CHEBI:15378"/>
        <dbReference type="ChEBI" id="CHEBI:33019"/>
        <dbReference type="ChEBI" id="CHEBI:43474"/>
        <dbReference type="EC" id="3.6.1.1"/>
    </reaction>
</comment>
<comment type="biophysicochemical properties">
    <kinetics>
        <KM evidence="2">32.4 uM for Mg2-PPi</KM>
    </kinetics>
</comment>
<comment type="subunit">
    <text evidence="2">Monomer.</text>
</comment>
<comment type="similarity">
    <text evidence="1">Belongs to the PPase family.</text>
</comment>
<organism>
    <name type="scientific">Euglena gracilis</name>
    <dbReference type="NCBI Taxonomy" id="3039"/>
    <lineage>
        <taxon>Eukaryota</taxon>
        <taxon>Discoba</taxon>
        <taxon>Euglenozoa</taxon>
        <taxon>Euglenida</taxon>
        <taxon>Spirocuta</taxon>
        <taxon>Euglenophyceae</taxon>
        <taxon>Euglenales</taxon>
        <taxon>Euglenaceae</taxon>
        <taxon>Euglena</taxon>
    </lineage>
</organism>
<sequence>MDTKLGLVEEEAAN</sequence>
<dbReference type="EC" id="3.6.1.1"/>
<dbReference type="SABIO-RK" id="P81987"/>
<dbReference type="GO" id="GO:0004427">
    <property type="term" value="F:inorganic diphosphate phosphatase activity"/>
    <property type="evidence" value="ECO:0007669"/>
    <property type="project" value="UniProtKB-EC"/>
</dbReference>
<feature type="chain" id="PRO_0000253941" description="Inorganic pyrophosphatase">
    <location>
        <begin position="1"/>
        <end position="14" status="greater than"/>
    </location>
</feature>
<feature type="non-terminal residue" evidence="3">
    <location>
        <position position="14"/>
    </location>
</feature>
<name>IPYR_EUGGR</name>
<accession>P81987</accession>
<evidence type="ECO:0000255" key="1"/>
<evidence type="ECO:0000269" key="2">
    <source>
    </source>
</evidence>
<evidence type="ECO:0000303" key="3">
    <source>
    </source>
</evidence>
<evidence type="ECO:0000305" key="4"/>
<reference evidence="4" key="1">
    <citation type="journal article" date="2006" name="Biochem. J.">
        <title>A novel subfamily of monomeric inorganic pyrophosphatases in photosynthetic eukaryotes.</title>
        <authorList>
            <person name="Gomez-Garcia M.R."/>
            <person name="Losada M."/>
            <person name="Serrano A."/>
        </authorList>
    </citation>
    <scope>PROTEIN SEQUENCE</scope>
    <scope>CATALYTIC ACTIVITY</scope>
    <scope>BIOPHYSICOCHEMICAL PROPERTIES</scope>
    <scope>SUBUNIT</scope>
    <source>
        <strain>SAG 1224-5/15</strain>
    </source>
</reference>
<protein>
    <recommendedName>
        <fullName>Inorganic pyrophosphatase</fullName>
        <ecNumber>3.6.1.1</ecNumber>
    </recommendedName>
    <alternativeName>
        <fullName>Pyrophosphate phospho-hydrolase</fullName>
        <shortName>PPase</shortName>
    </alternativeName>
</protein>